<protein>
    <recommendedName>
        <fullName evidence="1">Biotin synthase</fullName>
        <ecNumber evidence="1">2.8.1.6</ecNumber>
    </recommendedName>
</protein>
<sequence length="331" mass="35821">MSDILAVAREQVLERGVGLNQDQTLQVLQLPDDRLDDLLALAHEVRMAWCGPDVEVEGIISLKTGGCPEDCHFCSQSGLFASPVRSAWLDVPSLVEAAKQTAKTGATEFCIVAAVRGPDERLLAQVAAGIEAIRNEVDIQIACSLGMLTAEQVERLSEMGVHRYNHNLETARSFFTNVVTTHTWEERWDTLRMVREAGMEVCCGGILGMGETLEQRAEFAANLAELDPHEVPLNFLNPRPGTPFGDLEVLPAAEALKAVAAFRLALPRTMLRFAGGREITLGDLGAKKGILGGINAVIVGNYLTTLGRPAEADLELLDDLQMPIKALNASL</sequence>
<reference key="1">
    <citation type="submission" date="2007-02" db="EMBL/GenBank/DDBJ databases">
        <title>Complete sequence of Mycobacterium sp. JLS.</title>
        <authorList>
            <consortium name="US DOE Joint Genome Institute"/>
            <person name="Copeland A."/>
            <person name="Lucas S."/>
            <person name="Lapidus A."/>
            <person name="Barry K."/>
            <person name="Detter J.C."/>
            <person name="Glavina del Rio T."/>
            <person name="Hammon N."/>
            <person name="Israni S."/>
            <person name="Dalin E."/>
            <person name="Tice H."/>
            <person name="Pitluck S."/>
            <person name="Chain P."/>
            <person name="Malfatti S."/>
            <person name="Shin M."/>
            <person name="Vergez L."/>
            <person name="Schmutz J."/>
            <person name="Larimer F."/>
            <person name="Land M."/>
            <person name="Hauser L."/>
            <person name="Kyrpides N."/>
            <person name="Mikhailova N."/>
            <person name="Miller C.D."/>
            <person name="Anderson A.J."/>
            <person name="Sims R.C."/>
            <person name="Richardson P."/>
        </authorList>
    </citation>
    <scope>NUCLEOTIDE SEQUENCE [LARGE SCALE GENOMIC DNA]</scope>
    <source>
        <strain>JLS</strain>
    </source>
</reference>
<organism>
    <name type="scientific">Mycobacterium sp. (strain JLS)</name>
    <dbReference type="NCBI Taxonomy" id="164757"/>
    <lineage>
        <taxon>Bacteria</taxon>
        <taxon>Bacillati</taxon>
        <taxon>Actinomycetota</taxon>
        <taxon>Actinomycetes</taxon>
        <taxon>Mycobacteriales</taxon>
        <taxon>Mycobacteriaceae</taxon>
        <taxon>Mycobacterium</taxon>
    </lineage>
</organism>
<gene>
    <name evidence="1" type="primary">bioB</name>
    <name type="ordered locus">Mjls_3090</name>
</gene>
<name>BIOB_MYCSJ</name>
<accession>A3Q142</accession>
<evidence type="ECO:0000255" key="1">
    <source>
        <dbReference type="HAMAP-Rule" id="MF_01694"/>
    </source>
</evidence>
<evidence type="ECO:0000255" key="2">
    <source>
        <dbReference type="PROSITE-ProRule" id="PRU01266"/>
    </source>
</evidence>
<dbReference type="EC" id="2.8.1.6" evidence="1"/>
<dbReference type="EMBL" id="CP000580">
    <property type="protein sequence ID" value="ABN98869.1"/>
    <property type="molecule type" value="Genomic_DNA"/>
</dbReference>
<dbReference type="SMR" id="A3Q142"/>
<dbReference type="KEGG" id="mjl:Mjls_3090"/>
<dbReference type="HOGENOM" id="CLU_033172_2_1_11"/>
<dbReference type="BioCyc" id="MSP164757:G1G8C-3115-MONOMER"/>
<dbReference type="UniPathway" id="UPA00078">
    <property type="reaction ID" value="UER00162"/>
</dbReference>
<dbReference type="GO" id="GO:0051537">
    <property type="term" value="F:2 iron, 2 sulfur cluster binding"/>
    <property type="evidence" value="ECO:0007669"/>
    <property type="project" value="UniProtKB-KW"/>
</dbReference>
<dbReference type="GO" id="GO:0051539">
    <property type="term" value="F:4 iron, 4 sulfur cluster binding"/>
    <property type="evidence" value="ECO:0007669"/>
    <property type="project" value="UniProtKB-KW"/>
</dbReference>
<dbReference type="GO" id="GO:0004076">
    <property type="term" value="F:biotin synthase activity"/>
    <property type="evidence" value="ECO:0007669"/>
    <property type="project" value="UniProtKB-UniRule"/>
</dbReference>
<dbReference type="GO" id="GO:0005506">
    <property type="term" value="F:iron ion binding"/>
    <property type="evidence" value="ECO:0007669"/>
    <property type="project" value="UniProtKB-UniRule"/>
</dbReference>
<dbReference type="GO" id="GO:0009102">
    <property type="term" value="P:biotin biosynthetic process"/>
    <property type="evidence" value="ECO:0007669"/>
    <property type="project" value="UniProtKB-UniRule"/>
</dbReference>
<dbReference type="CDD" id="cd01335">
    <property type="entry name" value="Radical_SAM"/>
    <property type="match status" value="1"/>
</dbReference>
<dbReference type="FunFam" id="3.20.20.70:FF:000026">
    <property type="entry name" value="Biotin synthase"/>
    <property type="match status" value="1"/>
</dbReference>
<dbReference type="Gene3D" id="3.20.20.70">
    <property type="entry name" value="Aldolase class I"/>
    <property type="match status" value="1"/>
</dbReference>
<dbReference type="HAMAP" id="MF_01694">
    <property type="entry name" value="BioB"/>
    <property type="match status" value="1"/>
</dbReference>
<dbReference type="InterPro" id="IPR013785">
    <property type="entry name" value="Aldolase_TIM"/>
</dbReference>
<dbReference type="InterPro" id="IPR010722">
    <property type="entry name" value="BATS_dom"/>
</dbReference>
<dbReference type="InterPro" id="IPR002684">
    <property type="entry name" value="Biotin_synth/BioAB"/>
</dbReference>
<dbReference type="InterPro" id="IPR024177">
    <property type="entry name" value="Biotin_synthase"/>
</dbReference>
<dbReference type="InterPro" id="IPR006638">
    <property type="entry name" value="Elp3/MiaA/NifB-like_rSAM"/>
</dbReference>
<dbReference type="InterPro" id="IPR007197">
    <property type="entry name" value="rSAM"/>
</dbReference>
<dbReference type="NCBIfam" id="TIGR00433">
    <property type="entry name" value="bioB"/>
    <property type="match status" value="1"/>
</dbReference>
<dbReference type="PANTHER" id="PTHR22976">
    <property type="entry name" value="BIOTIN SYNTHASE"/>
    <property type="match status" value="1"/>
</dbReference>
<dbReference type="PANTHER" id="PTHR22976:SF2">
    <property type="entry name" value="BIOTIN SYNTHASE, MITOCHONDRIAL"/>
    <property type="match status" value="1"/>
</dbReference>
<dbReference type="Pfam" id="PF06968">
    <property type="entry name" value="BATS"/>
    <property type="match status" value="1"/>
</dbReference>
<dbReference type="Pfam" id="PF04055">
    <property type="entry name" value="Radical_SAM"/>
    <property type="match status" value="1"/>
</dbReference>
<dbReference type="PIRSF" id="PIRSF001619">
    <property type="entry name" value="Biotin_synth"/>
    <property type="match status" value="1"/>
</dbReference>
<dbReference type="SFLD" id="SFLDG01082">
    <property type="entry name" value="B12-binding_domain_containing"/>
    <property type="match status" value="1"/>
</dbReference>
<dbReference type="SFLD" id="SFLDG01278">
    <property type="entry name" value="biotin_synthase_like"/>
    <property type="match status" value="1"/>
</dbReference>
<dbReference type="SFLD" id="SFLDS00029">
    <property type="entry name" value="Radical_SAM"/>
    <property type="match status" value="1"/>
</dbReference>
<dbReference type="SMART" id="SM00876">
    <property type="entry name" value="BATS"/>
    <property type="match status" value="1"/>
</dbReference>
<dbReference type="SMART" id="SM00729">
    <property type="entry name" value="Elp3"/>
    <property type="match status" value="1"/>
</dbReference>
<dbReference type="SUPFAM" id="SSF102114">
    <property type="entry name" value="Radical SAM enzymes"/>
    <property type="match status" value="1"/>
</dbReference>
<dbReference type="PROSITE" id="PS51918">
    <property type="entry name" value="RADICAL_SAM"/>
    <property type="match status" value="1"/>
</dbReference>
<keyword id="KW-0001">2Fe-2S</keyword>
<keyword id="KW-0004">4Fe-4S</keyword>
<keyword id="KW-0093">Biotin biosynthesis</keyword>
<keyword id="KW-0408">Iron</keyword>
<keyword id="KW-0411">Iron-sulfur</keyword>
<keyword id="KW-0479">Metal-binding</keyword>
<keyword id="KW-0949">S-adenosyl-L-methionine</keyword>
<keyword id="KW-0808">Transferase</keyword>
<comment type="function">
    <text evidence="1">Catalyzes the conversion of dethiobiotin (DTB) to biotin by the insertion of a sulfur atom into dethiobiotin via a radical-based mechanism.</text>
</comment>
<comment type="catalytic activity">
    <reaction evidence="1">
        <text>(4R,5S)-dethiobiotin + (sulfur carrier)-SH + 2 reduced [2Fe-2S]-[ferredoxin] + 2 S-adenosyl-L-methionine = (sulfur carrier)-H + biotin + 2 5'-deoxyadenosine + 2 L-methionine + 2 oxidized [2Fe-2S]-[ferredoxin]</text>
        <dbReference type="Rhea" id="RHEA:22060"/>
        <dbReference type="Rhea" id="RHEA-COMP:10000"/>
        <dbReference type="Rhea" id="RHEA-COMP:10001"/>
        <dbReference type="Rhea" id="RHEA-COMP:14737"/>
        <dbReference type="Rhea" id="RHEA-COMP:14739"/>
        <dbReference type="ChEBI" id="CHEBI:17319"/>
        <dbReference type="ChEBI" id="CHEBI:29917"/>
        <dbReference type="ChEBI" id="CHEBI:33737"/>
        <dbReference type="ChEBI" id="CHEBI:33738"/>
        <dbReference type="ChEBI" id="CHEBI:57586"/>
        <dbReference type="ChEBI" id="CHEBI:57844"/>
        <dbReference type="ChEBI" id="CHEBI:59789"/>
        <dbReference type="ChEBI" id="CHEBI:64428"/>
        <dbReference type="ChEBI" id="CHEBI:149473"/>
        <dbReference type="EC" id="2.8.1.6"/>
    </reaction>
</comment>
<comment type="cofactor">
    <cofactor evidence="1">
        <name>[4Fe-4S] cluster</name>
        <dbReference type="ChEBI" id="CHEBI:49883"/>
    </cofactor>
    <text evidence="1">Binds 1 [4Fe-4S] cluster. The cluster is coordinated with 3 cysteines and an exchangeable S-adenosyl-L-methionine.</text>
</comment>
<comment type="cofactor">
    <cofactor evidence="1">
        <name>[2Fe-2S] cluster</name>
        <dbReference type="ChEBI" id="CHEBI:190135"/>
    </cofactor>
    <text evidence="1">Binds 1 [2Fe-2S] cluster. The cluster is coordinated with 3 cysteines and 1 arginine.</text>
</comment>
<comment type="pathway">
    <text evidence="1">Cofactor biosynthesis; biotin biosynthesis; biotin from 7,8-diaminononanoate: step 2/2.</text>
</comment>
<comment type="subunit">
    <text evidence="1">Homodimer.</text>
</comment>
<comment type="similarity">
    <text evidence="1">Belongs to the radical SAM superfamily. Biotin synthase family.</text>
</comment>
<proteinExistence type="inferred from homology"/>
<feature type="chain" id="PRO_0000381483" description="Biotin synthase">
    <location>
        <begin position="1"/>
        <end position="331"/>
    </location>
</feature>
<feature type="domain" description="Radical SAM core" evidence="2">
    <location>
        <begin position="52"/>
        <end position="277"/>
    </location>
</feature>
<feature type="binding site" evidence="1">
    <location>
        <position position="67"/>
    </location>
    <ligand>
        <name>[4Fe-4S] cluster</name>
        <dbReference type="ChEBI" id="CHEBI:49883"/>
        <note>4Fe-4S-S-AdoMet</note>
    </ligand>
</feature>
<feature type="binding site" evidence="1">
    <location>
        <position position="71"/>
    </location>
    <ligand>
        <name>[4Fe-4S] cluster</name>
        <dbReference type="ChEBI" id="CHEBI:49883"/>
        <note>4Fe-4S-S-AdoMet</note>
    </ligand>
</feature>
<feature type="binding site" evidence="1">
    <location>
        <position position="74"/>
    </location>
    <ligand>
        <name>[4Fe-4S] cluster</name>
        <dbReference type="ChEBI" id="CHEBI:49883"/>
        <note>4Fe-4S-S-AdoMet</note>
    </ligand>
</feature>
<feature type="binding site" evidence="1">
    <location>
        <position position="110"/>
    </location>
    <ligand>
        <name>[2Fe-2S] cluster</name>
        <dbReference type="ChEBI" id="CHEBI:190135"/>
    </ligand>
</feature>
<feature type="binding site" evidence="1">
    <location>
        <position position="143"/>
    </location>
    <ligand>
        <name>[2Fe-2S] cluster</name>
        <dbReference type="ChEBI" id="CHEBI:190135"/>
    </ligand>
</feature>
<feature type="binding site" evidence="1">
    <location>
        <position position="202"/>
    </location>
    <ligand>
        <name>[2Fe-2S] cluster</name>
        <dbReference type="ChEBI" id="CHEBI:190135"/>
    </ligand>
</feature>
<feature type="binding site" evidence="1">
    <location>
        <position position="272"/>
    </location>
    <ligand>
        <name>[2Fe-2S] cluster</name>
        <dbReference type="ChEBI" id="CHEBI:190135"/>
    </ligand>
</feature>